<gene>
    <name type="ordered locus">YBR220C</name>
    <name type="ORF">YBR1510</name>
</gene>
<dbReference type="EMBL" id="Z36088">
    <property type="protein sequence ID" value="CAA85183.1"/>
    <property type="molecule type" value="Genomic_DNA"/>
</dbReference>
<dbReference type="EMBL" id="BK006936">
    <property type="protein sequence ID" value="DAA07336.1"/>
    <property type="molecule type" value="Genomic_DNA"/>
</dbReference>
<dbReference type="PIR" id="S46096">
    <property type="entry name" value="S46096"/>
</dbReference>
<dbReference type="RefSeq" id="NP_009779.3">
    <property type="nucleotide sequence ID" value="NM_001178568.3"/>
</dbReference>
<dbReference type="BioGRID" id="32917">
    <property type="interactions" value="69"/>
</dbReference>
<dbReference type="DIP" id="DIP-5702N"/>
<dbReference type="FunCoup" id="P38318">
    <property type="interactions" value="135"/>
</dbReference>
<dbReference type="IntAct" id="P38318">
    <property type="interactions" value="2"/>
</dbReference>
<dbReference type="STRING" id="4932.YBR220C"/>
<dbReference type="TCDB" id="2.A.1.25.4">
    <property type="family name" value="the major facilitator superfamily (mfs)"/>
</dbReference>
<dbReference type="iPTMnet" id="P38318"/>
<dbReference type="PaxDb" id="4932-YBR220C"/>
<dbReference type="PeptideAtlas" id="P38318"/>
<dbReference type="EnsemblFungi" id="YBR220C_mRNA">
    <property type="protein sequence ID" value="YBR220C"/>
    <property type="gene ID" value="YBR220C"/>
</dbReference>
<dbReference type="GeneID" id="852521"/>
<dbReference type="KEGG" id="sce:YBR220C"/>
<dbReference type="AGR" id="SGD:S000000424"/>
<dbReference type="SGD" id="S000000424">
    <property type="gene designation" value="YBR220C"/>
</dbReference>
<dbReference type="VEuPathDB" id="FungiDB:YBR220C"/>
<dbReference type="eggNOG" id="KOG3574">
    <property type="taxonomic scope" value="Eukaryota"/>
</dbReference>
<dbReference type="GeneTree" id="ENSGT00940000154019"/>
<dbReference type="HOGENOM" id="CLU_020502_1_1_1"/>
<dbReference type="InParanoid" id="P38318"/>
<dbReference type="OMA" id="RRKSWIM"/>
<dbReference type="OrthoDB" id="6415790at2759"/>
<dbReference type="BioCyc" id="YEAST:G3O-29156-MONOMER"/>
<dbReference type="Reactome" id="R-SCE-425397">
    <property type="pathway name" value="Transport of vitamins, nucleosides, and related molecules"/>
</dbReference>
<dbReference type="BioGRID-ORCS" id="852521">
    <property type="hits" value="0 hits in 10 CRISPR screens"/>
</dbReference>
<dbReference type="PRO" id="PR:P38318"/>
<dbReference type="Proteomes" id="UP000002311">
    <property type="component" value="Chromosome II"/>
</dbReference>
<dbReference type="RNAct" id="P38318">
    <property type="molecule type" value="protein"/>
</dbReference>
<dbReference type="GO" id="GO:0016020">
    <property type="term" value="C:membrane"/>
    <property type="evidence" value="ECO:0007669"/>
    <property type="project" value="UniProtKB-SubCell"/>
</dbReference>
<dbReference type="GO" id="GO:0008521">
    <property type="term" value="F:acetyl-CoA transmembrane transporter activity"/>
    <property type="evidence" value="ECO:0007669"/>
    <property type="project" value="InterPro"/>
</dbReference>
<dbReference type="GO" id="GO:0035348">
    <property type="term" value="P:acetyl-CoA transmembrane transport"/>
    <property type="evidence" value="ECO:0007669"/>
    <property type="project" value="InterPro"/>
</dbReference>
<dbReference type="InterPro" id="IPR024371">
    <property type="entry name" value="AcetylCoA_trans_1-like"/>
</dbReference>
<dbReference type="InterPro" id="IPR004752">
    <property type="entry name" value="AmpG_permease/AT-1"/>
</dbReference>
<dbReference type="InterPro" id="IPR036259">
    <property type="entry name" value="MFS_trans_sf"/>
</dbReference>
<dbReference type="PANTHER" id="PTHR12778:SF9">
    <property type="entry name" value="ACETYL-COENZYME A TRANSPORTER 1"/>
    <property type="match status" value="1"/>
</dbReference>
<dbReference type="PANTHER" id="PTHR12778">
    <property type="entry name" value="SOLUTE CARRIER FAMILY 33 ACETYL-COA TRANSPORTER -RELATED"/>
    <property type="match status" value="1"/>
</dbReference>
<dbReference type="Pfam" id="PF13000">
    <property type="entry name" value="Acatn"/>
    <property type="match status" value="1"/>
</dbReference>
<dbReference type="SUPFAM" id="SSF103473">
    <property type="entry name" value="MFS general substrate transporter"/>
    <property type="match status" value="1"/>
</dbReference>
<proteinExistence type="evidence at protein level"/>
<feature type="chain" id="PRO_0000202514" description="Uncharacterized membrane protein YBR220C">
    <location>
        <begin position="1"/>
        <end position="560"/>
    </location>
</feature>
<feature type="topological domain" description="Cytoplasmic" evidence="1">
    <location>
        <begin position="1"/>
        <end position="17"/>
    </location>
</feature>
<feature type="transmembrane region" description="Helical" evidence="1">
    <location>
        <begin position="18"/>
        <end position="38"/>
    </location>
</feature>
<feature type="topological domain" description="Extracellular" evidence="1">
    <location>
        <begin position="39"/>
        <end position="54"/>
    </location>
</feature>
<feature type="transmembrane region" description="Helical" evidence="1">
    <location>
        <begin position="55"/>
        <end position="75"/>
    </location>
</feature>
<feature type="topological domain" description="Cytoplasmic" evidence="1">
    <location>
        <begin position="76"/>
        <end position="88"/>
    </location>
</feature>
<feature type="transmembrane region" description="Helical" evidence="1">
    <location>
        <begin position="89"/>
        <end position="109"/>
    </location>
</feature>
<feature type="topological domain" description="Extracellular" evidence="1">
    <location>
        <begin position="110"/>
        <end position="139"/>
    </location>
</feature>
<feature type="transmembrane region" description="Helical" evidence="1">
    <location>
        <begin position="140"/>
        <end position="160"/>
    </location>
</feature>
<feature type="topological domain" description="Cytoplasmic" evidence="1">
    <location>
        <begin position="161"/>
        <end position="172"/>
    </location>
</feature>
<feature type="transmembrane region" description="Helical" evidence="1">
    <location>
        <begin position="173"/>
        <end position="193"/>
    </location>
</feature>
<feature type="topological domain" description="Extracellular" evidence="1">
    <location>
        <begin position="194"/>
        <end position="214"/>
    </location>
</feature>
<feature type="transmembrane region" description="Helical" evidence="1">
    <location>
        <begin position="215"/>
        <end position="235"/>
    </location>
</feature>
<feature type="topological domain" description="Cytoplasmic" evidence="1">
    <location>
        <begin position="236"/>
        <end position="329"/>
    </location>
</feature>
<feature type="transmembrane region" description="Helical" evidence="1">
    <location>
        <begin position="330"/>
        <end position="350"/>
    </location>
</feature>
<feature type="topological domain" description="Extracellular" evidence="1">
    <location>
        <begin position="351"/>
        <end position="374"/>
    </location>
</feature>
<feature type="transmembrane region" description="Helical" evidence="1">
    <location>
        <begin position="375"/>
        <end position="395"/>
    </location>
</feature>
<feature type="topological domain" description="Cytoplasmic" evidence="1">
    <location>
        <begin position="396"/>
        <end position="421"/>
    </location>
</feature>
<feature type="transmembrane region" description="Helical" evidence="1">
    <location>
        <begin position="422"/>
        <end position="442"/>
    </location>
</feature>
<feature type="topological domain" description="Extracellular" evidence="1">
    <location>
        <begin position="443"/>
        <end position="521"/>
    </location>
</feature>
<feature type="transmembrane region" description="Helical" evidence="1">
    <location>
        <begin position="522"/>
        <end position="542"/>
    </location>
</feature>
<feature type="topological domain" description="Cytoplasmic" evidence="1">
    <location>
        <begin position="543"/>
        <end position="560"/>
    </location>
</feature>
<organism>
    <name type="scientific">Saccharomyces cerevisiae (strain ATCC 204508 / S288c)</name>
    <name type="common">Baker's yeast</name>
    <dbReference type="NCBI Taxonomy" id="559292"/>
    <lineage>
        <taxon>Eukaryota</taxon>
        <taxon>Fungi</taxon>
        <taxon>Dikarya</taxon>
        <taxon>Ascomycota</taxon>
        <taxon>Saccharomycotina</taxon>
        <taxon>Saccharomycetes</taxon>
        <taxon>Saccharomycetales</taxon>
        <taxon>Saccharomycetaceae</taxon>
        <taxon>Saccharomyces</taxon>
    </lineage>
</organism>
<accession>P38318</accession>
<accession>D6VQL6</accession>
<comment type="subcellular location">
    <subcellularLocation>
        <location>Membrane</location>
        <topology>Multi-pass membrane protein</topology>
    </subcellularLocation>
</comment>
<protein>
    <recommendedName>
        <fullName>Uncharacterized membrane protein YBR220C</fullName>
    </recommendedName>
</protein>
<keyword id="KW-0472">Membrane</keyword>
<keyword id="KW-1185">Reference proteome</keyword>
<keyword id="KW-0812">Transmembrane</keyword>
<keyword id="KW-1133">Transmembrane helix</keyword>
<keyword id="KW-0813">Transport</keyword>
<name>YB70_YEAST</name>
<sequence>MEPKRKSGSLAKHDLPQFYLLIMLYLAQGIPVGLAFGTVPFLLKSLAKETSFTSLGIFSMATYPYSLKIIWSPIVDSLYNKRIGRRRSWIIPVQFVSGFVLWALGWCISQGIIFDGVDDAFHNRGNGTLHSVSIKNLTWWFGLLVFLCATQDIAVDGWALTILSKESLSYASTAQTIGLNIGYFMSFTIFLSLNSSDFANKYFRNIPLDHGFISLGGYMKFSGMLYIVITIYIIFCTKEKPYVEYLPKVEPINTSDGGSKPISIEYDDGDVVSTQNTSSIKYIYRCFIKVLKLKSVRSLAFIHMISKFAFQCNEAATNLKLLEQGFKREDLAVTVLIDLPFEIIFGYYVVKWSSDKDPMIRDNRRLRNSTGTNKVIKFLVGDAGVLTPWLWGFLGRLAAAVLGSYVVKQFPKDGEISTGYFCLVIFQHLLGSFMNTVQFIGISAFHTRVADPVLGGTYMTLLNTLSNFGGTWPRLIIMSMINYFTVYQCTIPGTNKVYVTHGGSMQACTELLNGTVTILRDGYYITNLICIVVGLFLYFGYLKRKILHLQSLPISSWRCT</sequence>
<evidence type="ECO:0000255" key="1"/>
<reference key="1">
    <citation type="journal article" date="1994" name="EMBO J.">
        <title>Complete DNA sequence of yeast chromosome II.</title>
        <authorList>
            <person name="Feldmann H."/>
            <person name="Aigle M."/>
            <person name="Aljinovic G."/>
            <person name="Andre B."/>
            <person name="Baclet M.C."/>
            <person name="Barthe C."/>
            <person name="Baur A."/>
            <person name="Becam A.-M."/>
            <person name="Biteau N."/>
            <person name="Boles E."/>
            <person name="Brandt T."/>
            <person name="Brendel M."/>
            <person name="Brueckner M."/>
            <person name="Bussereau F."/>
            <person name="Christiansen C."/>
            <person name="Contreras R."/>
            <person name="Crouzet M."/>
            <person name="Cziepluch C."/>
            <person name="Demolis N."/>
            <person name="Delaveau T."/>
            <person name="Doignon F."/>
            <person name="Domdey H."/>
            <person name="Duesterhus S."/>
            <person name="Dubois E."/>
            <person name="Dujon B."/>
            <person name="El Bakkoury M."/>
            <person name="Entian K.-D."/>
            <person name="Feuermann M."/>
            <person name="Fiers W."/>
            <person name="Fobo G.M."/>
            <person name="Fritz C."/>
            <person name="Gassenhuber J."/>
            <person name="Glansdorff N."/>
            <person name="Goffeau A."/>
            <person name="Grivell L.A."/>
            <person name="de Haan M."/>
            <person name="Hein C."/>
            <person name="Herbert C.J."/>
            <person name="Hollenberg C.P."/>
            <person name="Holmstroem K."/>
            <person name="Jacq C."/>
            <person name="Jacquet M."/>
            <person name="Jauniaux J.-C."/>
            <person name="Jonniaux J.-L."/>
            <person name="Kallesoee T."/>
            <person name="Kiesau P."/>
            <person name="Kirchrath L."/>
            <person name="Koetter P."/>
            <person name="Korol S."/>
            <person name="Liebl S."/>
            <person name="Logghe M."/>
            <person name="Lohan A.J.E."/>
            <person name="Louis E.J."/>
            <person name="Li Z.Y."/>
            <person name="Maat M.J."/>
            <person name="Mallet L."/>
            <person name="Mannhaupt G."/>
            <person name="Messenguy F."/>
            <person name="Miosga T."/>
            <person name="Molemans F."/>
            <person name="Mueller S."/>
            <person name="Nasr F."/>
            <person name="Obermaier B."/>
            <person name="Perea J."/>
            <person name="Pierard A."/>
            <person name="Piravandi E."/>
            <person name="Pohl F.M."/>
            <person name="Pohl T.M."/>
            <person name="Potier S."/>
            <person name="Proft M."/>
            <person name="Purnelle B."/>
            <person name="Ramezani Rad M."/>
            <person name="Rieger M."/>
            <person name="Rose M."/>
            <person name="Schaaff-Gerstenschlaeger I."/>
            <person name="Scherens B."/>
            <person name="Schwarzlose C."/>
            <person name="Skala J."/>
            <person name="Slonimski P.P."/>
            <person name="Smits P.H.M."/>
            <person name="Souciet J.-L."/>
            <person name="Steensma H.Y."/>
            <person name="Stucka R."/>
            <person name="Urrestarazu L.A."/>
            <person name="van der Aart Q.J.M."/>
            <person name="Van Dyck L."/>
            <person name="Vassarotti A."/>
            <person name="Vetter I."/>
            <person name="Vierendeels F."/>
            <person name="Vissers S."/>
            <person name="Wagner G."/>
            <person name="de Wergifosse P."/>
            <person name="Wolfe K.H."/>
            <person name="Zagulski M."/>
            <person name="Zimmermann F.K."/>
            <person name="Mewes H.-W."/>
            <person name="Kleine K."/>
        </authorList>
    </citation>
    <scope>NUCLEOTIDE SEQUENCE [LARGE SCALE GENOMIC DNA]</scope>
    <source>
        <strain>ATCC 204508 / S288c</strain>
    </source>
</reference>
<reference key="2">
    <citation type="journal article" date="2014" name="G3 (Bethesda)">
        <title>The reference genome sequence of Saccharomyces cerevisiae: Then and now.</title>
        <authorList>
            <person name="Engel S.R."/>
            <person name="Dietrich F.S."/>
            <person name="Fisk D.G."/>
            <person name="Binkley G."/>
            <person name="Balakrishnan R."/>
            <person name="Costanzo M.C."/>
            <person name="Dwight S.S."/>
            <person name="Hitz B.C."/>
            <person name="Karra K."/>
            <person name="Nash R.S."/>
            <person name="Weng S."/>
            <person name="Wong E.D."/>
            <person name="Lloyd P."/>
            <person name="Skrzypek M.S."/>
            <person name="Miyasato S.R."/>
            <person name="Simison M."/>
            <person name="Cherry J.M."/>
        </authorList>
    </citation>
    <scope>GENOME REANNOTATION</scope>
    <source>
        <strain>ATCC 204508 / S288c</strain>
    </source>
</reference>
<reference key="3">
    <citation type="journal article" date="2006" name="Proc. Natl. Acad. Sci. U.S.A.">
        <title>A global topology map of the Saccharomyces cerevisiae membrane proteome.</title>
        <authorList>
            <person name="Kim H."/>
            <person name="Melen K."/>
            <person name="Oesterberg M."/>
            <person name="von Heijne G."/>
        </authorList>
    </citation>
    <scope>TOPOLOGY [LARGE SCALE ANALYSIS]</scope>
    <source>
        <strain>ATCC 208353 / W303-1A</strain>
    </source>
</reference>